<accession>B7J4A5</accession>
<feature type="chain" id="PRO_1000144363" description="Large ribosomal subunit protein bL17">
    <location>
        <begin position="1"/>
        <end position="124"/>
    </location>
</feature>
<organism>
    <name type="scientific">Acidithiobacillus ferrooxidans (strain ATCC 23270 / DSM 14882 / CIP 104768 / NCIMB 8455)</name>
    <name type="common">Ferrobacillus ferrooxidans (strain ATCC 23270)</name>
    <dbReference type="NCBI Taxonomy" id="243159"/>
    <lineage>
        <taxon>Bacteria</taxon>
        <taxon>Pseudomonadati</taxon>
        <taxon>Pseudomonadota</taxon>
        <taxon>Acidithiobacillia</taxon>
        <taxon>Acidithiobacillales</taxon>
        <taxon>Acidithiobacillaceae</taxon>
        <taxon>Acidithiobacillus</taxon>
    </lineage>
</organism>
<reference key="1">
    <citation type="journal article" date="2008" name="BMC Genomics">
        <title>Acidithiobacillus ferrooxidans metabolism: from genome sequence to industrial applications.</title>
        <authorList>
            <person name="Valdes J."/>
            <person name="Pedroso I."/>
            <person name="Quatrini R."/>
            <person name="Dodson R.J."/>
            <person name="Tettelin H."/>
            <person name="Blake R. II"/>
            <person name="Eisen J.A."/>
            <person name="Holmes D.S."/>
        </authorList>
    </citation>
    <scope>NUCLEOTIDE SEQUENCE [LARGE SCALE GENOMIC DNA]</scope>
    <source>
        <strain>ATCC 23270 / DSM 14882 / CIP 104768 / NCIMB 8455</strain>
    </source>
</reference>
<evidence type="ECO:0000255" key="1">
    <source>
        <dbReference type="HAMAP-Rule" id="MF_01368"/>
    </source>
</evidence>
<evidence type="ECO:0000305" key="2"/>
<keyword id="KW-1185">Reference proteome</keyword>
<keyword id="KW-0687">Ribonucleoprotein</keyword>
<keyword id="KW-0689">Ribosomal protein</keyword>
<name>RL17_ACIF2</name>
<sequence>MRHRKSGKQLNRNSSHRQAMFANMMVSLFHHERIVTTLPKAKELRRFAEPMITLAKEATVAKRRLAFSRLRDRQAVVKLFDDLGPHYLARPGGYLRIVKYGFRAGDNAPLAIVELVDRQTAAAE</sequence>
<dbReference type="EMBL" id="CP001219">
    <property type="protein sequence ID" value="ACK78467.1"/>
    <property type="molecule type" value="Genomic_DNA"/>
</dbReference>
<dbReference type="RefSeq" id="WP_012536100.1">
    <property type="nucleotide sequence ID" value="NC_011761.1"/>
</dbReference>
<dbReference type="SMR" id="B7J4A5"/>
<dbReference type="STRING" id="243159.AFE_0355"/>
<dbReference type="PaxDb" id="243159-AFE_0355"/>
<dbReference type="GeneID" id="65279732"/>
<dbReference type="KEGG" id="afr:AFE_0355"/>
<dbReference type="eggNOG" id="COG0203">
    <property type="taxonomic scope" value="Bacteria"/>
</dbReference>
<dbReference type="HOGENOM" id="CLU_074407_2_0_6"/>
<dbReference type="Proteomes" id="UP000001362">
    <property type="component" value="Chromosome"/>
</dbReference>
<dbReference type="GO" id="GO:0022625">
    <property type="term" value="C:cytosolic large ribosomal subunit"/>
    <property type="evidence" value="ECO:0007669"/>
    <property type="project" value="TreeGrafter"/>
</dbReference>
<dbReference type="GO" id="GO:0003735">
    <property type="term" value="F:structural constituent of ribosome"/>
    <property type="evidence" value="ECO:0007669"/>
    <property type="project" value="InterPro"/>
</dbReference>
<dbReference type="GO" id="GO:0006412">
    <property type="term" value="P:translation"/>
    <property type="evidence" value="ECO:0007669"/>
    <property type="project" value="UniProtKB-UniRule"/>
</dbReference>
<dbReference type="FunFam" id="3.90.1030.10:FF:000001">
    <property type="entry name" value="50S ribosomal protein L17"/>
    <property type="match status" value="1"/>
</dbReference>
<dbReference type="Gene3D" id="3.90.1030.10">
    <property type="entry name" value="Ribosomal protein L17"/>
    <property type="match status" value="1"/>
</dbReference>
<dbReference type="HAMAP" id="MF_01368">
    <property type="entry name" value="Ribosomal_bL17"/>
    <property type="match status" value="1"/>
</dbReference>
<dbReference type="InterPro" id="IPR000456">
    <property type="entry name" value="Ribosomal_bL17"/>
</dbReference>
<dbReference type="InterPro" id="IPR047859">
    <property type="entry name" value="Ribosomal_bL17_CS"/>
</dbReference>
<dbReference type="InterPro" id="IPR036373">
    <property type="entry name" value="Ribosomal_bL17_sf"/>
</dbReference>
<dbReference type="NCBIfam" id="TIGR00059">
    <property type="entry name" value="L17"/>
    <property type="match status" value="1"/>
</dbReference>
<dbReference type="PANTHER" id="PTHR14413:SF16">
    <property type="entry name" value="LARGE RIBOSOMAL SUBUNIT PROTEIN BL17M"/>
    <property type="match status" value="1"/>
</dbReference>
<dbReference type="PANTHER" id="PTHR14413">
    <property type="entry name" value="RIBOSOMAL PROTEIN L17"/>
    <property type="match status" value="1"/>
</dbReference>
<dbReference type="Pfam" id="PF01196">
    <property type="entry name" value="Ribosomal_L17"/>
    <property type="match status" value="1"/>
</dbReference>
<dbReference type="SUPFAM" id="SSF64263">
    <property type="entry name" value="Prokaryotic ribosomal protein L17"/>
    <property type="match status" value="1"/>
</dbReference>
<dbReference type="PROSITE" id="PS01167">
    <property type="entry name" value="RIBOSOMAL_L17"/>
    <property type="match status" value="1"/>
</dbReference>
<protein>
    <recommendedName>
        <fullName evidence="1">Large ribosomal subunit protein bL17</fullName>
    </recommendedName>
    <alternativeName>
        <fullName evidence="2">50S ribosomal protein L17</fullName>
    </alternativeName>
</protein>
<proteinExistence type="inferred from homology"/>
<comment type="subunit">
    <text evidence="1">Part of the 50S ribosomal subunit. Contacts protein L32.</text>
</comment>
<comment type="similarity">
    <text evidence="1">Belongs to the bacterial ribosomal protein bL17 family.</text>
</comment>
<gene>
    <name evidence="1" type="primary">rplQ</name>
    <name type="ordered locus">AFE_0355</name>
</gene>